<protein>
    <recommendedName>
        <fullName evidence="1">UPF0178 protein OB0454</fullName>
    </recommendedName>
</protein>
<dbReference type="EMBL" id="BA000028">
    <property type="protein sequence ID" value="BAC12410.1"/>
    <property type="molecule type" value="Genomic_DNA"/>
</dbReference>
<dbReference type="RefSeq" id="WP_011064860.1">
    <property type="nucleotide sequence ID" value="NC_004193.1"/>
</dbReference>
<dbReference type="SMR" id="Q8ET11"/>
<dbReference type="STRING" id="221109.gene:10732657"/>
<dbReference type="KEGG" id="oih:OB0454"/>
<dbReference type="eggNOG" id="COG1671">
    <property type="taxonomic scope" value="Bacteria"/>
</dbReference>
<dbReference type="HOGENOM" id="CLU_106619_0_0_9"/>
<dbReference type="OrthoDB" id="9798918at2"/>
<dbReference type="PhylomeDB" id="Q8ET11"/>
<dbReference type="Proteomes" id="UP000000822">
    <property type="component" value="Chromosome"/>
</dbReference>
<dbReference type="HAMAP" id="MF_00489">
    <property type="entry name" value="UPF0178"/>
    <property type="match status" value="1"/>
</dbReference>
<dbReference type="InterPro" id="IPR003791">
    <property type="entry name" value="UPF0178"/>
</dbReference>
<dbReference type="NCBIfam" id="NF001095">
    <property type="entry name" value="PRK00124.1"/>
    <property type="match status" value="1"/>
</dbReference>
<dbReference type="PANTHER" id="PTHR35146">
    <property type="entry name" value="UPF0178 PROTEIN YAII"/>
    <property type="match status" value="1"/>
</dbReference>
<dbReference type="PANTHER" id="PTHR35146:SF1">
    <property type="entry name" value="UPF0178 PROTEIN YAII"/>
    <property type="match status" value="1"/>
</dbReference>
<dbReference type="Pfam" id="PF02639">
    <property type="entry name" value="DUF188"/>
    <property type="match status" value="1"/>
</dbReference>
<proteinExistence type="inferred from homology"/>
<gene>
    <name type="ordered locus">OB0454</name>
</gene>
<reference key="1">
    <citation type="journal article" date="2002" name="Nucleic Acids Res.">
        <title>Genome sequence of Oceanobacillus iheyensis isolated from the Iheya Ridge and its unexpected adaptive capabilities to extreme environments.</title>
        <authorList>
            <person name="Takami H."/>
            <person name="Takaki Y."/>
            <person name="Uchiyama I."/>
        </authorList>
    </citation>
    <scope>NUCLEOTIDE SEQUENCE [LARGE SCALE GENOMIC DNA]</scope>
    <source>
        <strain>DSM 14371 / CIP 107618 / JCM 11309 / KCTC 3954 / HTE831</strain>
    </source>
</reference>
<feature type="chain" id="PRO_0000175991" description="UPF0178 protein OB0454">
    <location>
        <begin position="1"/>
        <end position="146"/>
    </location>
</feature>
<evidence type="ECO:0000255" key="1">
    <source>
        <dbReference type="HAMAP-Rule" id="MF_00489"/>
    </source>
</evidence>
<keyword id="KW-1185">Reference proteome</keyword>
<comment type="similarity">
    <text evidence="1">Belongs to the UPF0178 family.</text>
</comment>
<accession>Q8ET11</accession>
<organism>
    <name type="scientific">Oceanobacillus iheyensis (strain DSM 14371 / CIP 107618 / JCM 11309 / KCTC 3954 / HTE831)</name>
    <dbReference type="NCBI Taxonomy" id="221109"/>
    <lineage>
        <taxon>Bacteria</taxon>
        <taxon>Bacillati</taxon>
        <taxon>Bacillota</taxon>
        <taxon>Bacilli</taxon>
        <taxon>Bacillales</taxon>
        <taxon>Bacillaceae</taxon>
        <taxon>Oceanobacillus</taxon>
    </lineage>
</organism>
<name>Y454_OCEIH</name>
<sequence length="146" mass="16398">MKVYVDADACPVKDIIIKESGKQNIAVTLVTSLSHYSLHEHPSHVETIYVDTGADAADYRIMQLANKGDIIVTQDYGLASLALAKGCYVLHHKGFAYTNHNIDQLLQSRYLSAKERKSGKRTKGPKALTEEDRINFNQLFLQYITK</sequence>